<keyword id="KW-1003">Cell membrane</keyword>
<keyword id="KW-0963">Cytoplasm</keyword>
<keyword id="KW-0278">Fertilization</keyword>
<keyword id="KW-0472">Membrane</keyword>
<keyword id="KW-1185">Reference proteome</keyword>
<keyword id="KW-0677">Repeat</keyword>
<keyword id="KW-0832">Ubl conjugation</keyword>
<keyword id="KW-0853">WD repeat</keyword>
<organism>
    <name type="scientific">Rattus norvegicus</name>
    <name type="common">Rat</name>
    <dbReference type="NCBI Taxonomy" id="10116"/>
    <lineage>
        <taxon>Eukaryota</taxon>
        <taxon>Metazoa</taxon>
        <taxon>Chordata</taxon>
        <taxon>Craniata</taxon>
        <taxon>Vertebrata</taxon>
        <taxon>Euteleostomi</taxon>
        <taxon>Mammalia</taxon>
        <taxon>Eutheria</taxon>
        <taxon>Euarchontoglires</taxon>
        <taxon>Glires</taxon>
        <taxon>Rodentia</taxon>
        <taxon>Myomorpha</taxon>
        <taxon>Muroidea</taxon>
        <taxon>Muridae</taxon>
        <taxon>Murinae</taxon>
        <taxon>Rattus</taxon>
    </lineage>
</organism>
<gene>
    <name type="primary">Wdr54</name>
</gene>
<evidence type="ECO:0000250" key="1">
    <source>
        <dbReference type="UniProtKB" id="Q9H977"/>
    </source>
</evidence>
<evidence type="ECO:0000255" key="2"/>
<evidence type="ECO:0000269" key="3">
    <source>
    </source>
</evidence>
<sequence>MFRRERSIPLRGSAAALSNNLSVLQLPARDLTHFGVVHGPSAQLLSAAPEGVPLAQRQLHVKEGAGVSPPLITQVHWCVLPFRVLLVLTSHRGIQMYESDGSVMVYWHALDSGDASSVQAMFARGIAASVHFICVGTWSGRILVFDIPAKGPNIVLNEELAGHQTPITDIATERAQGQDGVADMVTADDSGVLCVWRSGPEFTLLTRIAGFGVPCPSVQLWQGIVAAGYGNGQVRLYDAGTGALHIQISAHARTISALDLAPEVGKLLSAAEDTFVHIWKLNRNPESGSIEVEHCHGECISDTQVCGARFCDPGGSSFAVTGYDLAEILRFGSV</sequence>
<reference key="1">
    <citation type="journal article" date="2004" name="Nature">
        <title>Genome sequence of the Brown Norway rat yields insights into mammalian evolution.</title>
        <authorList>
            <person name="Gibbs R.A."/>
            <person name="Weinstock G.M."/>
            <person name="Metzker M.L."/>
            <person name="Muzny D.M."/>
            <person name="Sodergren E.J."/>
            <person name="Scherer S."/>
            <person name="Scott G."/>
            <person name="Steffen D."/>
            <person name="Worley K.C."/>
            <person name="Burch P.E."/>
            <person name="Okwuonu G."/>
            <person name="Hines S."/>
            <person name="Lewis L."/>
            <person name="Deramo C."/>
            <person name="Delgado O."/>
            <person name="Dugan-Rocha S."/>
            <person name="Miner G."/>
            <person name="Morgan M."/>
            <person name="Hawes A."/>
            <person name="Gill R."/>
            <person name="Holt R.A."/>
            <person name="Adams M.D."/>
            <person name="Amanatides P.G."/>
            <person name="Baden-Tillson H."/>
            <person name="Barnstead M."/>
            <person name="Chin S."/>
            <person name="Evans C.A."/>
            <person name="Ferriera S."/>
            <person name="Fosler C."/>
            <person name="Glodek A."/>
            <person name="Gu Z."/>
            <person name="Jennings D."/>
            <person name="Kraft C.L."/>
            <person name="Nguyen T."/>
            <person name="Pfannkoch C.M."/>
            <person name="Sitter C."/>
            <person name="Sutton G.G."/>
            <person name="Venter J.C."/>
            <person name="Woodage T."/>
            <person name="Smith D."/>
            <person name="Lee H.-M."/>
            <person name="Gustafson E."/>
            <person name="Cahill P."/>
            <person name="Kana A."/>
            <person name="Doucette-Stamm L."/>
            <person name="Weinstock K."/>
            <person name="Fechtel K."/>
            <person name="Weiss R.B."/>
            <person name="Dunn D.M."/>
            <person name="Green E.D."/>
            <person name="Blakesley R.W."/>
            <person name="Bouffard G.G."/>
            <person name="De Jong P.J."/>
            <person name="Osoegawa K."/>
            <person name="Zhu B."/>
            <person name="Marra M."/>
            <person name="Schein J."/>
            <person name="Bosdet I."/>
            <person name="Fjell C."/>
            <person name="Jones S."/>
            <person name="Krzywinski M."/>
            <person name="Mathewson C."/>
            <person name="Siddiqui A."/>
            <person name="Wye N."/>
            <person name="McPherson J."/>
            <person name="Zhao S."/>
            <person name="Fraser C.M."/>
            <person name="Shetty J."/>
            <person name="Shatsman S."/>
            <person name="Geer K."/>
            <person name="Chen Y."/>
            <person name="Abramzon S."/>
            <person name="Nierman W.C."/>
            <person name="Havlak P.H."/>
            <person name="Chen R."/>
            <person name="Durbin K.J."/>
            <person name="Egan A."/>
            <person name="Ren Y."/>
            <person name="Song X.-Z."/>
            <person name="Li B."/>
            <person name="Liu Y."/>
            <person name="Qin X."/>
            <person name="Cawley S."/>
            <person name="Cooney A.J."/>
            <person name="D'Souza L.M."/>
            <person name="Martin K."/>
            <person name="Wu J.Q."/>
            <person name="Gonzalez-Garay M.L."/>
            <person name="Jackson A.R."/>
            <person name="Kalafus K.J."/>
            <person name="McLeod M.P."/>
            <person name="Milosavljevic A."/>
            <person name="Virk D."/>
            <person name="Volkov A."/>
            <person name="Wheeler D.A."/>
            <person name="Zhang Z."/>
            <person name="Bailey J.A."/>
            <person name="Eichler E.E."/>
            <person name="Tuzun E."/>
            <person name="Birney E."/>
            <person name="Mongin E."/>
            <person name="Ureta-Vidal A."/>
            <person name="Woodwark C."/>
            <person name="Zdobnov E."/>
            <person name="Bork P."/>
            <person name="Suyama M."/>
            <person name="Torrents D."/>
            <person name="Alexandersson M."/>
            <person name="Trask B.J."/>
            <person name="Young J.M."/>
            <person name="Huang H."/>
            <person name="Wang H."/>
            <person name="Xing H."/>
            <person name="Daniels S."/>
            <person name="Gietzen D."/>
            <person name="Schmidt J."/>
            <person name="Stevens K."/>
            <person name="Vitt U."/>
            <person name="Wingrove J."/>
            <person name="Camara F."/>
            <person name="Mar Alba M."/>
            <person name="Abril J.F."/>
            <person name="Guigo R."/>
            <person name="Smit A."/>
            <person name="Dubchak I."/>
            <person name="Rubin E.M."/>
            <person name="Couronne O."/>
            <person name="Poliakov A."/>
            <person name="Huebner N."/>
            <person name="Ganten D."/>
            <person name="Goesele C."/>
            <person name="Hummel O."/>
            <person name="Kreitler T."/>
            <person name="Lee Y.-A."/>
            <person name="Monti J."/>
            <person name="Schulz H."/>
            <person name="Zimdahl H."/>
            <person name="Himmelbauer H."/>
            <person name="Lehrach H."/>
            <person name="Jacob H.J."/>
            <person name="Bromberg S."/>
            <person name="Gullings-Handley J."/>
            <person name="Jensen-Seaman M.I."/>
            <person name="Kwitek A.E."/>
            <person name="Lazar J."/>
            <person name="Pasko D."/>
            <person name="Tonellato P.J."/>
            <person name="Twigger S."/>
            <person name="Ponting C.P."/>
            <person name="Duarte J.M."/>
            <person name="Rice S."/>
            <person name="Goodstadt L."/>
            <person name="Beatson S.A."/>
            <person name="Emes R.D."/>
            <person name="Winter E.E."/>
            <person name="Webber C."/>
            <person name="Brandt P."/>
            <person name="Nyakatura G."/>
            <person name="Adetobi M."/>
            <person name="Chiaromonte F."/>
            <person name="Elnitski L."/>
            <person name="Eswara P."/>
            <person name="Hardison R.C."/>
            <person name="Hou M."/>
            <person name="Kolbe D."/>
            <person name="Makova K."/>
            <person name="Miller W."/>
            <person name="Nekrutenko A."/>
            <person name="Riemer C."/>
            <person name="Schwartz S."/>
            <person name="Taylor J."/>
            <person name="Yang S."/>
            <person name="Zhang Y."/>
            <person name="Lindpaintner K."/>
            <person name="Andrews T.D."/>
            <person name="Caccamo M."/>
            <person name="Clamp M."/>
            <person name="Clarke L."/>
            <person name="Curwen V."/>
            <person name="Durbin R.M."/>
            <person name="Eyras E."/>
            <person name="Searle S.M."/>
            <person name="Cooper G.M."/>
            <person name="Batzoglou S."/>
            <person name="Brudno M."/>
            <person name="Sidow A."/>
            <person name="Stone E.A."/>
            <person name="Payseur B.A."/>
            <person name="Bourque G."/>
            <person name="Lopez-Otin C."/>
            <person name="Puente X.S."/>
            <person name="Chakrabarti K."/>
            <person name="Chatterji S."/>
            <person name="Dewey C."/>
            <person name="Pachter L."/>
            <person name="Bray N."/>
            <person name="Yap V.B."/>
            <person name="Caspi A."/>
            <person name="Tesler G."/>
            <person name="Pevzner P.A."/>
            <person name="Haussler D."/>
            <person name="Roskin K.M."/>
            <person name="Baertsch R."/>
            <person name="Clawson H."/>
            <person name="Furey T.S."/>
            <person name="Hinrichs A.S."/>
            <person name="Karolchik D."/>
            <person name="Kent W.J."/>
            <person name="Rosenbloom K.R."/>
            <person name="Trumbower H."/>
            <person name="Weirauch M."/>
            <person name="Cooper D.N."/>
            <person name="Stenson P.D."/>
            <person name="Ma B."/>
            <person name="Brent M."/>
            <person name="Arumugam M."/>
            <person name="Shteynberg D."/>
            <person name="Copley R.R."/>
            <person name="Taylor M.S."/>
            <person name="Riethman H."/>
            <person name="Mudunuri U."/>
            <person name="Peterson J."/>
            <person name="Guyer M."/>
            <person name="Felsenfeld A."/>
            <person name="Old S."/>
            <person name="Mockrin S."/>
            <person name="Collins F.S."/>
        </authorList>
    </citation>
    <scope>NUCLEOTIDE SEQUENCE [LARGE SCALE GENOMIC DNA]</scope>
    <source>
        <strain>Brown Norway</strain>
    </source>
</reference>
<reference key="2">
    <citation type="submission" date="2005-07" db="EMBL/GenBank/DDBJ databases">
        <authorList>
            <person name="Mural R.J."/>
            <person name="Li P.W."/>
            <person name="Adams M.D."/>
            <person name="Amanatides P.G."/>
            <person name="Baden-Tillson H."/>
            <person name="Barnstead M."/>
            <person name="Chin S.H."/>
            <person name="Dew I."/>
            <person name="Evans C.A."/>
            <person name="Ferriera S."/>
            <person name="Flanigan M."/>
            <person name="Fosler C."/>
            <person name="Glodek A."/>
            <person name="Gu Z."/>
            <person name="Holt R.A."/>
            <person name="Jennings D."/>
            <person name="Kraft C.L."/>
            <person name="Lu F."/>
            <person name="Nguyen T."/>
            <person name="Nusskern D.R."/>
            <person name="Pfannkoch C.M."/>
            <person name="Sitter C."/>
            <person name="Sutton G.G."/>
            <person name="Venter J.C."/>
            <person name="Wang Z."/>
            <person name="Woodage T."/>
            <person name="Zheng X.H."/>
            <person name="Zhong F."/>
        </authorList>
    </citation>
    <scope>NUCLEOTIDE SEQUENCE [LARGE SCALE GENOMIC DNA]</scope>
    <source>
        <strain>Brown Norway</strain>
    </source>
</reference>
<reference key="3">
    <citation type="journal article" date="2024" name="Theriogenology">
        <title>Participation of WD repeat-containing protein 54 (WDR54) in rat sperm-oocyte fusion through interaction with both IZUMO1 and JUNO.</title>
        <authorList>
            <person name="Lai X."/>
            <person name="Liu R."/>
            <person name="Li M."/>
            <person name="Fan Y."/>
            <person name="Li H."/>
            <person name="Han G."/>
            <person name="Guo R."/>
            <person name="Ma H."/>
            <person name="Su H."/>
            <person name="Xing W."/>
        </authorList>
    </citation>
    <scope>FUNCTION</scope>
    <scope>SUBCELLULAR LOCATION</scope>
    <scope>TISSUE SPECIFICITY</scope>
    <scope>INTERACTION WITH IZUMO1 AND IZUMO1R</scope>
</reference>
<comment type="function">
    <text evidence="1 3">Plays a role in the adhesion and fusion of the sperm-oocyte membrane through its interactions with IZUMO1 and IZUMO1R/JUNO (PubMed:37951137). When cross-linked to form dimers and trimers, it has a regulatory effect on ERK signaling pathway activity in response to EGF stimulation. Colocalizes with the EGF receptor in WDR54-specific vesicle where it sustains the internalization and controls the degradation of the EGF receptor after EGF stimulation (By similarity).</text>
</comment>
<comment type="subunit">
    <text evidence="1 3">Homodimer and homotrimer; forms tight forms of dimers and trimers (By similarity). Interacts with IZUMO1 and IZUMO1R/JUNO (PubMed:37951137).</text>
</comment>
<comment type="subcellular location">
    <subcellularLocation>
        <location evidence="1">Vesicle</location>
    </subcellularLocation>
    <subcellularLocation>
        <location evidence="3">Cytoplasm</location>
    </subcellularLocation>
    <subcellularLocation>
        <location evidence="3">Cell membrane</location>
    </subcellularLocation>
    <text evidence="1">Aggregates in vesicles when cross-linked.</text>
</comment>
<comment type="tissue specificity">
    <text evidence="3">Widely expressed in the ovary and testis (at protein level).</text>
</comment>
<comment type="domain">
    <text evidence="1">WD6 repeat is required for cross-linking by TGM2.</text>
</comment>
<comment type="PTM">
    <text evidence="1">Cross-linked to tightly form both dimers and trimers by TGM2. Cross-linking enhances the activation of EGF receptor-mediated signaling pathway. Cross-linking is inhibited by EGF.</text>
</comment>
<comment type="PTM">
    <text evidence="1">Ubiquitinated. EGF increases ubiquitination.</text>
</comment>
<proteinExistence type="evidence at protein level"/>
<feature type="chain" id="PRO_0000461603" description="WD repeat domain 54">
    <location>
        <begin position="1"/>
        <end position="334"/>
    </location>
</feature>
<feature type="repeat" description="WD 1" evidence="2">
    <location>
        <begin position="162"/>
        <end position="206"/>
    </location>
</feature>
<feature type="repeat" description="WD 2" evidence="2">
    <location>
        <begin position="208"/>
        <end position="247"/>
    </location>
</feature>
<feature type="repeat" description="WD 3" evidence="2">
    <location>
        <begin position="250"/>
        <end position="289"/>
    </location>
</feature>
<protein>
    <recommendedName>
        <fullName>WD repeat domain 54</fullName>
    </recommendedName>
</protein>
<accession>D3ZX63</accession>
<accession>A6IAL0</accession>
<dbReference type="EMBL" id="AC130866">
    <property type="status" value="NOT_ANNOTATED_CDS"/>
    <property type="molecule type" value="Genomic_DNA"/>
</dbReference>
<dbReference type="EMBL" id="AC117925">
    <property type="status" value="NOT_ANNOTATED_CDS"/>
    <property type="molecule type" value="Genomic_DNA"/>
</dbReference>
<dbReference type="EMBL" id="CH473957">
    <property type="protein sequence ID" value="EDL91128.1"/>
    <property type="molecule type" value="Genomic_DNA"/>
</dbReference>
<dbReference type="RefSeq" id="NP_001102715.1">
    <property type="nucleotide sequence ID" value="NM_001109245.1"/>
</dbReference>
<dbReference type="RefSeq" id="XP_006236839.1">
    <property type="nucleotide sequence ID" value="XM_006236777.3"/>
</dbReference>
<dbReference type="RefSeq" id="XP_006236840.1">
    <property type="nucleotide sequence ID" value="XM_006236778.4"/>
</dbReference>
<dbReference type="RefSeq" id="XP_006236842.1">
    <property type="nucleotide sequence ID" value="XM_006236780.5"/>
</dbReference>
<dbReference type="RefSeq" id="XP_006236843.1">
    <property type="nucleotide sequence ID" value="XM_006236781.5"/>
</dbReference>
<dbReference type="RefSeq" id="XP_008761261.1">
    <property type="nucleotide sequence ID" value="XM_008763039.2"/>
</dbReference>
<dbReference type="RefSeq" id="XP_008761262.1">
    <property type="nucleotide sequence ID" value="XM_008763040.2"/>
</dbReference>
<dbReference type="RefSeq" id="XP_008761263.1">
    <property type="nucleotide sequence ID" value="XM_008763041.2"/>
</dbReference>
<dbReference type="RefSeq" id="XP_008761264.1">
    <property type="nucleotide sequence ID" value="XM_008763042.2"/>
</dbReference>
<dbReference type="RefSeq" id="XP_017448303.1">
    <property type="nucleotide sequence ID" value="XM_017592814.1"/>
</dbReference>
<dbReference type="RefSeq" id="XP_017448304.1">
    <property type="nucleotide sequence ID" value="XM_017592815.1"/>
</dbReference>
<dbReference type="RefSeq" id="XP_017448494.1">
    <property type="nucleotide sequence ID" value="XM_017593005.1"/>
</dbReference>
<dbReference type="RefSeq" id="XP_017448495.1">
    <property type="nucleotide sequence ID" value="XM_017593006.1"/>
</dbReference>
<dbReference type="RefSeq" id="XP_017458308.1">
    <property type="nucleotide sequence ID" value="XM_017602819.1"/>
</dbReference>
<dbReference type="RefSeq" id="XP_017458309.1">
    <property type="nucleotide sequence ID" value="XM_017602820.1"/>
</dbReference>
<dbReference type="RefSeq" id="XP_017458310.1">
    <property type="nucleotide sequence ID" value="XM_017602821.1"/>
</dbReference>
<dbReference type="RefSeq" id="XP_017458311.1">
    <property type="nucleotide sequence ID" value="XM_017602822.1"/>
</dbReference>
<dbReference type="RefSeq" id="XP_017458312.1">
    <property type="nucleotide sequence ID" value="XM_017602823.1"/>
</dbReference>
<dbReference type="RefSeq" id="XP_017458313.1">
    <property type="nucleotide sequence ID" value="XM_017602824.1"/>
</dbReference>
<dbReference type="RefSeq" id="XP_017458314.1">
    <property type="nucleotide sequence ID" value="XM_017602825.1"/>
</dbReference>
<dbReference type="RefSeq" id="XP_038964079.1">
    <property type="nucleotide sequence ID" value="XM_039108151.2"/>
</dbReference>
<dbReference type="RefSeq" id="XP_063142594.1">
    <property type="nucleotide sequence ID" value="XM_063286524.1"/>
</dbReference>
<dbReference type="SMR" id="D3ZX63"/>
<dbReference type="FunCoup" id="D3ZX63">
    <property type="interactions" value="950"/>
</dbReference>
<dbReference type="STRING" id="10116.ENSRNOP00000013128"/>
<dbReference type="PhosphoSitePlus" id="D3ZX63"/>
<dbReference type="PaxDb" id="10116-ENSRNOP00000013128"/>
<dbReference type="Ensembl" id="ENSRNOT00000013128.6">
    <property type="protein sequence ID" value="ENSRNOP00000013128.3"/>
    <property type="gene ID" value="ENSRNOG00000009324.6"/>
</dbReference>
<dbReference type="Ensembl" id="ENSRNOT00055020876">
    <property type="protein sequence ID" value="ENSRNOP00055016851"/>
    <property type="gene ID" value="ENSRNOG00055012269"/>
</dbReference>
<dbReference type="Ensembl" id="ENSRNOT00060003733">
    <property type="protein sequence ID" value="ENSRNOP00060002593"/>
    <property type="gene ID" value="ENSRNOG00060002367"/>
</dbReference>
<dbReference type="Ensembl" id="ENSRNOT00065026247">
    <property type="protein sequence ID" value="ENSRNOP00065020626"/>
    <property type="gene ID" value="ENSRNOG00065015803"/>
</dbReference>
<dbReference type="GeneID" id="500226"/>
<dbReference type="KEGG" id="rno:500226"/>
<dbReference type="UCSC" id="RGD:1561494">
    <property type="organism name" value="rat"/>
</dbReference>
<dbReference type="AGR" id="RGD:1561494"/>
<dbReference type="CTD" id="84058"/>
<dbReference type="RGD" id="1561494">
    <property type="gene designation" value="Wdr54"/>
</dbReference>
<dbReference type="eggNOG" id="ENOG502QRUZ">
    <property type="taxonomic scope" value="Eukaryota"/>
</dbReference>
<dbReference type="GeneTree" id="ENSGT00390000014530"/>
<dbReference type="HOGENOM" id="CLU_045688_0_0_1"/>
<dbReference type="OMA" id="WENYICV"/>
<dbReference type="OrthoDB" id="756370at2759"/>
<dbReference type="TreeFam" id="TF329316"/>
<dbReference type="Proteomes" id="UP000002494">
    <property type="component" value="Chromosome 4"/>
</dbReference>
<dbReference type="Proteomes" id="UP000234681">
    <property type="component" value="Chromosome 4"/>
</dbReference>
<dbReference type="Bgee" id="ENSRNOG00000009324">
    <property type="expression patterns" value="Expressed in frontal cortex and 17 other cell types or tissues"/>
</dbReference>
<dbReference type="GO" id="GO:0005737">
    <property type="term" value="C:cytoplasm"/>
    <property type="evidence" value="ECO:0000314"/>
    <property type="project" value="UniProtKB"/>
</dbReference>
<dbReference type="GO" id="GO:0031514">
    <property type="term" value="C:motile cilium"/>
    <property type="evidence" value="ECO:0000318"/>
    <property type="project" value="GO_Central"/>
</dbReference>
<dbReference type="GO" id="GO:0005886">
    <property type="term" value="C:plasma membrane"/>
    <property type="evidence" value="ECO:0000314"/>
    <property type="project" value="UniProtKB"/>
</dbReference>
<dbReference type="GO" id="GO:0031982">
    <property type="term" value="C:vesicle"/>
    <property type="evidence" value="ECO:0000266"/>
    <property type="project" value="RGD"/>
</dbReference>
<dbReference type="GO" id="GO:0042803">
    <property type="term" value="F:protein homodimerization activity"/>
    <property type="evidence" value="ECO:0000266"/>
    <property type="project" value="RGD"/>
</dbReference>
<dbReference type="GO" id="GO:0007342">
    <property type="term" value="P:fusion of sperm to egg plasma membrane involved in single fertilization"/>
    <property type="evidence" value="ECO:0000315"/>
    <property type="project" value="UniProtKB"/>
</dbReference>
<dbReference type="GO" id="GO:0002091">
    <property type="term" value="P:negative regulation of receptor internalization"/>
    <property type="evidence" value="ECO:0000266"/>
    <property type="project" value="RGD"/>
</dbReference>
<dbReference type="GO" id="GO:0042058">
    <property type="term" value="P:regulation of epidermal growth factor receptor signaling pathway"/>
    <property type="evidence" value="ECO:0000266"/>
    <property type="project" value="RGD"/>
</dbReference>
<dbReference type="GO" id="GO:0043408">
    <property type="term" value="P:regulation of MAPK cascade"/>
    <property type="evidence" value="ECO:0000266"/>
    <property type="project" value="RGD"/>
</dbReference>
<dbReference type="GO" id="GO:0007338">
    <property type="term" value="P:single fertilization"/>
    <property type="evidence" value="ECO:0000315"/>
    <property type="project" value="UniProtKB"/>
</dbReference>
<dbReference type="FunFam" id="2.130.10.10:FF:000412">
    <property type="entry name" value="WD repeat domain 54"/>
    <property type="match status" value="1"/>
</dbReference>
<dbReference type="FunFam" id="2.130.10.10:FF:000508">
    <property type="entry name" value="WD repeat-containing protein 54 isoform X2"/>
    <property type="match status" value="1"/>
</dbReference>
<dbReference type="Gene3D" id="2.130.10.10">
    <property type="entry name" value="YVTN repeat-like/Quinoprotein amine dehydrogenase"/>
    <property type="match status" value="1"/>
</dbReference>
<dbReference type="InterPro" id="IPR015943">
    <property type="entry name" value="WD40/YVTN_repeat-like_dom_sf"/>
</dbReference>
<dbReference type="InterPro" id="IPR036322">
    <property type="entry name" value="WD40_repeat_dom_sf"/>
</dbReference>
<dbReference type="InterPro" id="IPR001680">
    <property type="entry name" value="WD40_rpt"/>
</dbReference>
<dbReference type="InterPro" id="IPR049546">
    <property type="entry name" value="WDR54_beta_propeller"/>
</dbReference>
<dbReference type="Pfam" id="PF21031">
    <property type="entry name" value="WDR54"/>
    <property type="match status" value="1"/>
</dbReference>
<dbReference type="SMART" id="SM00320">
    <property type="entry name" value="WD40"/>
    <property type="match status" value="3"/>
</dbReference>
<dbReference type="SUPFAM" id="SSF50978">
    <property type="entry name" value="WD40 repeat-like"/>
    <property type="match status" value="1"/>
</dbReference>
<dbReference type="PROSITE" id="PS50082">
    <property type="entry name" value="WD_REPEATS_2"/>
    <property type="match status" value="1"/>
</dbReference>
<dbReference type="PROSITE" id="PS50294">
    <property type="entry name" value="WD_REPEATS_REGION"/>
    <property type="match status" value="1"/>
</dbReference>
<name>WDR54_RAT</name>